<protein>
    <recommendedName>
        <fullName evidence="1">ATP synthase subunit c</fullName>
    </recommendedName>
    <alternativeName>
        <fullName evidence="1">ATP synthase F(0) sector subunit c</fullName>
    </alternativeName>
    <alternativeName>
        <fullName evidence="1">F-type ATPase subunit c</fullName>
        <shortName evidence="1">F-ATPase subunit c</shortName>
    </alternativeName>
    <alternativeName>
        <fullName evidence="1">Lipid-binding protein</fullName>
    </alternativeName>
</protein>
<sequence>MDNVSMDMLYIAVAVMIGLAAIGAAVGIGILGSKFLEGVARQPDLTSLLRTQFFVVMGLVDAIPMIAVGLGLYMLFAVI</sequence>
<feature type="chain" id="PRO_0000112142" description="ATP synthase subunit c">
    <location>
        <begin position="1"/>
        <end position="79"/>
    </location>
</feature>
<feature type="transmembrane region" description="Helical" evidence="1">
    <location>
        <begin position="11"/>
        <end position="31"/>
    </location>
</feature>
<feature type="transmembrane region" description="Helical" evidence="1">
    <location>
        <begin position="59"/>
        <end position="79"/>
    </location>
</feature>
<feature type="site" description="Reversibly protonated during proton transport" evidence="1">
    <location>
        <position position="61"/>
    </location>
</feature>
<keyword id="KW-0066">ATP synthesis</keyword>
<keyword id="KW-1003">Cell membrane</keyword>
<keyword id="KW-0138">CF(0)</keyword>
<keyword id="KW-0375">Hydrogen ion transport</keyword>
<keyword id="KW-0406">Ion transport</keyword>
<keyword id="KW-0446">Lipid-binding</keyword>
<keyword id="KW-0472">Membrane</keyword>
<keyword id="KW-1185">Reference proteome</keyword>
<keyword id="KW-0812">Transmembrane</keyword>
<keyword id="KW-1133">Transmembrane helix</keyword>
<keyword id="KW-0813">Transport</keyword>
<accession>Q89B44</accession>
<reference key="1">
    <citation type="journal article" date="2003" name="Proc. Natl. Acad. Sci. U.S.A.">
        <title>Reductive genome evolution in Buchnera aphidicola.</title>
        <authorList>
            <person name="van Ham R.C.H.J."/>
            <person name="Kamerbeek J."/>
            <person name="Palacios C."/>
            <person name="Rausell C."/>
            <person name="Abascal F."/>
            <person name="Bastolla U."/>
            <person name="Fernandez J.M."/>
            <person name="Jimenez L."/>
            <person name="Postigo M."/>
            <person name="Silva F.J."/>
            <person name="Tamames J."/>
            <person name="Viguera E."/>
            <person name="Latorre A."/>
            <person name="Valencia A."/>
            <person name="Moran F."/>
            <person name="Moya A."/>
        </authorList>
    </citation>
    <scope>NUCLEOTIDE SEQUENCE [LARGE SCALE GENOMIC DNA]</scope>
    <source>
        <strain>Bp</strain>
    </source>
</reference>
<evidence type="ECO:0000255" key="1">
    <source>
        <dbReference type="HAMAP-Rule" id="MF_01396"/>
    </source>
</evidence>
<proteinExistence type="inferred from homology"/>
<gene>
    <name evidence="1" type="primary">atpE</name>
    <name type="ordered locus">bbp_003</name>
</gene>
<comment type="function">
    <text evidence="1">F(1)F(0) ATP synthase produces ATP from ADP in the presence of a proton or sodium gradient. F-type ATPases consist of two structural domains, F(1) containing the extramembraneous catalytic core and F(0) containing the membrane proton channel, linked together by a central stalk and a peripheral stalk. During catalysis, ATP synthesis in the catalytic domain of F(1) is coupled via a rotary mechanism of the central stalk subunits to proton translocation.</text>
</comment>
<comment type="function">
    <text evidence="1">Key component of the F(0) channel; it plays a direct role in translocation across the membrane. A homomeric c-ring of between 10-14 subunits forms the central stalk rotor element with the F(1) delta and epsilon subunits.</text>
</comment>
<comment type="subunit">
    <text evidence="1">F-type ATPases have 2 components, F(1) - the catalytic core - and F(0) - the membrane proton channel. F(1) has five subunits: alpha(3), beta(3), gamma(1), delta(1), epsilon(1). F(0) has three main subunits: a(1), b(2) and c(10-14). The alpha and beta chains form an alternating ring which encloses part of the gamma chain. F(1) is attached to F(0) by a central stalk formed by the gamma and epsilon chains, while a peripheral stalk is formed by the delta and b chains.</text>
</comment>
<comment type="subcellular location">
    <subcellularLocation>
        <location evidence="1">Cell membrane</location>
        <topology evidence="1">Multi-pass membrane protein</topology>
    </subcellularLocation>
</comment>
<comment type="similarity">
    <text evidence="1">Belongs to the ATPase C chain family.</text>
</comment>
<name>ATPL_BUCBP</name>
<dbReference type="EMBL" id="AE016826">
    <property type="protein sequence ID" value="AAO26747.1"/>
    <property type="molecule type" value="Genomic_DNA"/>
</dbReference>
<dbReference type="RefSeq" id="WP_011091148.1">
    <property type="nucleotide sequence ID" value="NC_004545.1"/>
</dbReference>
<dbReference type="SMR" id="Q89B44"/>
<dbReference type="STRING" id="224915.bbp_003"/>
<dbReference type="KEGG" id="bab:bbp_003"/>
<dbReference type="eggNOG" id="ENOG5032S3K">
    <property type="taxonomic scope" value="Bacteria"/>
</dbReference>
<dbReference type="HOGENOM" id="CLU_148047_1_0_6"/>
<dbReference type="OrthoDB" id="9811659at2"/>
<dbReference type="Proteomes" id="UP000000601">
    <property type="component" value="Chromosome"/>
</dbReference>
<dbReference type="GO" id="GO:0005886">
    <property type="term" value="C:plasma membrane"/>
    <property type="evidence" value="ECO:0007669"/>
    <property type="project" value="UniProtKB-SubCell"/>
</dbReference>
<dbReference type="GO" id="GO:0045259">
    <property type="term" value="C:proton-transporting ATP synthase complex"/>
    <property type="evidence" value="ECO:0007669"/>
    <property type="project" value="UniProtKB-KW"/>
</dbReference>
<dbReference type="GO" id="GO:0033177">
    <property type="term" value="C:proton-transporting two-sector ATPase complex, proton-transporting domain"/>
    <property type="evidence" value="ECO:0007669"/>
    <property type="project" value="InterPro"/>
</dbReference>
<dbReference type="GO" id="GO:0008289">
    <property type="term" value="F:lipid binding"/>
    <property type="evidence" value="ECO:0007669"/>
    <property type="project" value="UniProtKB-KW"/>
</dbReference>
<dbReference type="GO" id="GO:0046933">
    <property type="term" value="F:proton-transporting ATP synthase activity, rotational mechanism"/>
    <property type="evidence" value="ECO:0007669"/>
    <property type="project" value="UniProtKB-UniRule"/>
</dbReference>
<dbReference type="CDD" id="cd18185">
    <property type="entry name" value="ATP-synt_Fo_c_ATPE"/>
    <property type="match status" value="1"/>
</dbReference>
<dbReference type="FunFam" id="1.20.20.10:FF:000002">
    <property type="entry name" value="ATP synthase subunit c"/>
    <property type="match status" value="1"/>
</dbReference>
<dbReference type="Gene3D" id="1.20.20.10">
    <property type="entry name" value="F1F0 ATP synthase subunit C"/>
    <property type="match status" value="1"/>
</dbReference>
<dbReference type="HAMAP" id="MF_01396">
    <property type="entry name" value="ATP_synth_c_bact"/>
    <property type="match status" value="1"/>
</dbReference>
<dbReference type="InterPro" id="IPR005953">
    <property type="entry name" value="ATP_synth_csu_bac/chlpt"/>
</dbReference>
<dbReference type="InterPro" id="IPR000454">
    <property type="entry name" value="ATP_synth_F0_csu"/>
</dbReference>
<dbReference type="InterPro" id="IPR020537">
    <property type="entry name" value="ATP_synth_F0_csu_DDCD_BS"/>
</dbReference>
<dbReference type="InterPro" id="IPR038662">
    <property type="entry name" value="ATP_synth_F0_csu_sf"/>
</dbReference>
<dbReference type="InterPro" id="IPR002379">
    <property type="entry name" value="ATPase_proteolipid_c-like_dom"/>
</dbReference>
<dbReference type="InterPro" id="IPR035921">
    <property type="entry name" value="F/V-ATP_Csub_sf"/>
</dbReference>
<dbReference type="NCBIfam" id="TIGR01260">
    <property type="entry name" value="ATP_synt_c"/>
    <property type="match status" value="1"/>
</dbReference>
<dbReference type="NCBIfam" id="NF005363">
    <property type="entry name" value="PRK06876.1"/>
    <property type="match status" value="1"/>
</dbReference>
<dbReference type="Pfam" id="PF00137">
    <property type="entry name" value="ATP-synt_C"/>
    <property type="match status" value="1"/>
</dbReference>
<dbReference type="PRINTS" id="PR00124">
    <property type="entry name" value="ATPASEC"/>
</dbReference>
<dbReference type="SUPFAM" id="SSF81333">
    <property type="entry name" value="F1F0 ATP synthase subunit C"/>
    <property type="match status" value="1"/>
</dbReference>
<dbReference type="PROSITE" id="PS00605">
    <property type="entry name" value="ATPASE_C"/>
    <property type="match status" value="1"/>
</dbReference>
<organism>
    <name type="scientific">Buchnera aphidicola subsp. Baizongia pistaciae (strain Bp)</name>
    <dbReference type="NCBI Taxonomy" id="224915"/>
    <lineage>
        <taxon>Bacteria</taxon>
        <taxon>Pseudomonadati</taxon>
        <taxon>Pseudomonadota</taxon>
        <taxon>Gammaproteobacteria</taxon>
        <taxon>Enterobacterales</taxon>
        <taxon>Erwiniaceae</taxon>
        <taxon>Buchnera</taxon>
    </lineage>
</organism>